<evidence type="ECO:0000255" key="1">
    <source>
        <dbReference type="HAMAP-Rule" id="MF_00522"/>
    </source>
</evidence>
<accession>Q6B947</accession>
<gene>
    <name evidence="1" type="primary">psaJ</name>
    <name type="ordered locus">Grc000006</name>
</gene>
<protein>
    <recommendedName>
        <fullName evidence="1">Photosystem I reaction center subunit IX</fullName>
    </recommendedName>
    <alternativeName>
        <fullName evidence="1">PSI-J</fullName>
    </alternativeName>
</protein>
<reference key="1">
    <citation type="journal article" date="2004" name="J. Mol. Evol.">
        <title>Comparative analysis of the complete plastid genome sequence of the red alga Gracilaria tenuistipitata var. liui provides insights into the evolution of rhodoplasts and their relationship to other plastids.</title>
        <authorList>
            <person name="Hagopian J.C."/>
            <person name="Reis M."/>
            <person name="Kitajima J.P."/>
            <person name="Bhattacharya D."/>
            <person name="de Oliveira M.C."/>
        </authorList>
    </citation>
    <scope>NUCLEOTIDE SEQUENCE [LARGE SCALE GENOMIC DNA]</scope>
</reference>
<comment type="function">
    <text evidence="1">May help in the organization of the PsaE and PsaF subunits.</text>
</comment>
<comment type="subcellular location">
    <subcellularLocation>
        <location evidence="1">Plastid</location>
        <location evidence="1">Chloroplast thylakoid membrane</location>
        <topology evidence="1">Single-pass membrane protein</topology>
    </subcellularLocation>
</comment>
<comment type="similarity">
    <text evidence="1">Belongs to the PsaJ family.</text>
</comment>
<feature type="chain" id="PRO_0000207790" description="Photosystem I reaction center subunit IX">
    <location>
        <begin position="1"/>
        <end position="42"/>
    </location>
</feature>
<feature type="transmembrane region" description="Helical" evidence="1">
    <location>
        <begin position="8"/>
        <end position="28"/>
    </location>
</feature>
<geneLocation type="chloroplast"/>
<proteinExistence type="inferred from homology"/>
<sequence>MNNNLLKYLSTIPVVGAIWLTFTAGFIIEINRFFPDILSLSL</sequence>
<name>PSAJ_GRATL</name>
<keyword id="KW-0150">Chloroplast</keyword>
<keyword id="KW-0472">Membrane</keyword>
<keyword id="KW-0602">Photosynthesis</keyword>
<keyword id="KW-0603">Photosystem I</keyword>
<keyword id="KW-0934">Plastid</keyword>
<keyword id="KW-0793">Thylakoid</keyword>
<keyword id="KW-0812">Transmembrane</keyword>
<keyword id="KW-1133">Transmembrane helix</keyword>
<dbReference type="EMBL" id="AY673996">
    <property type="protein sequence ID" value="AAT79588.1"/>
    <property type="molecule type" value="Genomic_DNA"/>
</dbReference>
<dbReference type="RefSeq" id="YP_063513.1">
    <property type="nucleotide sequence ID" value="NC_006137.1"/>
</dbReference>
<dbReference type="SMR" id="Q6B947"/>
<dbReference type="GeneID" id="2944074"/>
<dbReference type="GO" id="GO:0009535">
    <property type="term" value="C:chloroplast thylakoid membrane"/>
    <property type="evidence" value="ECO:0007669"/>
    <property type="project" value="UniProtKB-SubCell"/>
</dbReference>
<dbReference type="GO" id="GO:0009522">
    <property type="term" value="C:photosystem I"/>
    <property type="evidence" value="ECO:0007669"/>
    <property type="project" value="UniProtKB-KW"/>
</dbReference>
<dbReference type="GO" id="GO:0015979">
    <property type="term" value="P:photosynthesis"/>
    <property type="evidence" value="ECO:0007669"/>
    <property type="project" value="UniProtKB-UniRule"/>
</dbReference>
<dbReference type="Gene3D" id="1.20.5.510">
    <property type="entry name" value="Single helix bin"/>
    <property type="match status" value="1"/>
</dbReference>
<dbReference type="HAMAP" id="MF_00522">
    <property type="entry name" value="PSI_PsaJ"/>
    <property type="match status" value="1"/>
</dbReference>
<dbReference type="InterPro" id="IPR002615">
    <property type="entry name" value="PSI_PsaJ"/>
</dbReference>
<dbReference type="InterPro" id="IPR036062">
    <property type="entry name" value="PSI_PsaJ_sf"/>
</dbReference>
<dbReference type="PANTHER" id="PTHR36082">
    <property type="match status" value="1"/>
</dbReference>
<dbReference type="PANTHER" id="PTHR36082:SF2">
    <property type="entry name" value="PHOTOSYSTEM I REACTION CENTER SUBUNIT IX"/>
    <property type="match status" value="1"/>
</dbReference>
<dbReference type="Pfam" id="PF01701">
    <property type="entry name" value="PSI_PsaJ"/>
    <property type="match status" value="1"/>
</dbReference>
<dbReference type="SUPFAM" id="SSF81544">
    <property type="entry name" value="Subunit IX of photosystem I reaction centre, PsaJ"/>
    <property type="match status" value="1"/>
</dbReference>
<organism>
    <name type="scientific">Gracilaria tenuistipitata var. liui</name>
    <name type="common">Red alga</name>
    <dbReference type="NCBI Taxonomy" id="285951"/>
    <lineage>
        <taxon>Eukaryota</taxon>
        <taxon>Rhodophyta</taxon>
        <taxon>Florideophyceae</taxon>
        <taxon>Rhodymeniophycidae</taxon>
        <taxon>Gracilariales</taxon>
        <taxon>Gracilariaceae</taxon>
        <taxon>Gracilaria</taxon>
        <taxon>Gracilaria tenuistipitata</taxon>
    </lineage>
</organism>